<name>RL21_XANAC</name>
<sequence>MYAVLVTGGKQYRVAQGETLRVEKLEVEAGNEIKFDTILMLGDSDGIKLGDALKGASVTAKVVAHGRADKVRIIKFRRRKHHMKRQGHRQHYTEIEITGIAGGDKK</sequence>
<evidence type="ECO:0000255" key="1">
    <source>
        <dbReference type="HAMAP-Rule" id="MF_01363"/>
    </source>
</evidence>
<evidence type="ECO:0000305" key="2"/>
<organism>
    <name type="scientific">Xanthomonas axonopodis pv. citri (strain 306)</name>
    <dbReference type="NCBI Taxonomy" id="190486"/>
    <lineage>
        <taxon>Bacteria</taxon>
        <taxon>Pseudomonadati</taxon>
        <taxon>Pseudomonadota</taxon>
        <taxon>Gammaproteobacteria</taxon>
        <taxon>Lysobacterales</taxon>
        <taxon>Lysobacteraceae</taxon>
        <taxon>Xanthomonas</taxon>
    </lineage>
</organism>
<reference key="1">
    <citation type="journal article" date="2002" name="Nature">
        <title>Comparison of the genomes of two Xanthomonas pathogens with differing host specificities.</title>
        <authorList>
            <person name="da Silva A.C.R."/>
            <person name="Ferro J.A."/>
            <person name="Reinach F.C."/>
            <person name="Farah C.S."/>
            <person name="Furlan L.R."/>
            <person name="Quaggio R.B."/>
            <person name="Monteiro-Vitorello C.B."/>
            <person name="Van Sluys M.A."/>
            <person name="Almeida N.F. Jr."/>
            <person name="Alves L.M.C."/>
            <person name="do Amaral A.M."/>
            <person name="Bertolini M.C."/>
            <person name="Camargo L.E.A."/>
            <person name="Camarotte G."/>
            <person name="Cannavan F."/>
            <person name="Cardozo J."/>
            <person name="Chambergo F."/>
            <person name="Ciapina L.P."/>
            <person name="Cicarelli R.M.B."/>
            <person name="Coutinho L.L."/>
            <person name="Cursino-Santos J.R."/>
            <person name="El-Dorry H."/>
            <person name="Faria J.B."/>
            <person name="Ferreira A.J.S."/>
            <person name="Ferreira R.C.C."/>
            <person name="Ferro M.I.T."/>
            <person name="Formighieri E.F."/>
            <person name="Franco M.C."/>
            <person name="Greggio C.C."/>
            <person name="Gruber A."/>
            <person name="Katsuyama A.M."/>
            <person name="Kishi L.T."/>
            <person name="Leite R.P."/>
            <person name="Lemos E.G.M."/>
            <person name="Lemos M.V.F."/>
            <person name="Locali E.C."/>
            <person name="Machado M.A."/>
            <person name="Madeira A.M.B.N."/>
            <person name="Martinez-Rossi N.M."/>
            <person name="Martins E.C."/>
            <person name="Meidanis J."/>
            <person name="Menck C.F.M."/>
            <person name="Miyaki C.Y."/>
            <person name="Moon D.H."/>
            <person name="Moreira L.M."/>
            <person name="Novo M.T.M."/>
            <person name="Okura V.K."/>
            <person name="Oliveira M.C."/>
            <person name="Oliveira V.R."/>
            <person name="Pereira H.A."/>
            <person name="Rossi A."/>
            <person name="Sena J.A.D."/>
            <person name="Silva C."/>
            <person name="de Souza R.F."/>
            <person name="Spinola L.A.F."/>
            <person name="Takita M.A."/>
            <person name="Tamura R.E."/>
            <person name="Teixeira E.C."/>
            <person name="Tezza R.I.D."/>
            <person name="Trindade dos Santos M."/>
            <person name="Truffi D."/>
            <person name="Tsai S.M."/>
            <person name="White F.F."/>
            <person name="Setubal J.C."/>
            <person name="Kitajima J.P."/>
        </authorList>
    </citation>
    <scope>NUCLEOTIDE SEQUENCE [LARGE SCALE GENOMIC DNA]</scope>
    <source>
        <strain>306</strain>
    </source>
</reference>
<dbReference type="EMBL" id="AE008923">
    <property type="protein sequence ID" value="AAM36120.1"/>
    <property type="molecule type" value="Genomic_DNA"/>
</dbReference>
<dbReference type="RefSeq" id="WP_003484328.1">
    <property type="nucleotide sequence ID" value="NC_003919.1"/>
</dbReference>
<dbReference type="SMR" id="Q8PN25"/>
<dbReference type="GeneID" id="97509598"/>
<dbReference type="KEGG" id="xac:XAC1248"/>
<dbReference type="eggNOG" id="COG0261">
    <property type="taxonomic scope" value="Bacteria"/>
</dbReference>
<dbReference type="HOGENOM" id="CLU_061463_3_3_6"/>
<dbReference type="Proteomes" id="UP000000576">
    <property type="component" value="Chromosome"/>
</dbReference>
<dbReference type="GO" id="GO:0005737">
    <property type="term" value="C:cytoplasm"/>
    <property type="evidence" value="ECO:0007669"/>
    <property type="project" value="UniProtKB-ARBA"/>
</dbReference>
<dbReference type="GO" id="GO:1990904">
    <property type="term" value="C:ribonucleoprotein complex"/>
    <property type="evidence" value="ECO:0007669"/>
    <property type="project" value="UniProtKB-KW"/>
</dbReference>
<dbReference type="GO" id="GO:0005840">
    <property type="term" value="C:ribosome"/>
    <property type="evidence" value="ECO:0007669"/>
    <property type="project" value="UniProtKB-KW"/>
</dbReference>
<dbReference type="GO" id="GO:0019843">
    <property type="term" value="F:rRNA binding"/>
    <property type="evidence" value="ECO:0007669"/>
    <property type="project" value="UniProtKB-UniRule"/>
</dbReference>
<dbReference type="GO" id="GO:0003735">
    <property type="term" value="F:structural constituent of ribosome"/>
    <property type="evidence" value="ECO:0007669"/>
    <property type="project" value="InterPro"/>
</dbReference>
<dbReference type="GO" id="GO:0006412">
    <property type="term" value="P:translation"/>
    <property type="evidence" value="ECO:0007669"/>
    <property type="project" value="UniProtKB-UniRule"/>
</dbReference>
<dbReference type="HAMAP" id="MF_01363">
    <property type="entry name" value="Ribosomal_bL21"/>
    <property type="match status" value="1"/>
</dbReference>
<dbReference type="InterPro" id="IPR028909">
    <property type="entry name" value="bL21-like"/>
</dbReference>
<dbReference type="InterPro" id="IPR036164">
    <property type="entry name" value="bL21-like_sf"/>
</dbReference>
<dbReference type="InterPro" id="IPR001787">
    <property type="entry name" value="Ribosomal_bL21"/>
</dbReference>
<dbReference type="InterPro" id="IPR018258">
    <property type="entry name" value="Ribosomal_bL21_CS"/>
</dbReference>
<dbReference type="NCBIfam" id="TIGR00061">
    <property type="entry name" value="L21"/>
    <property type="match status" value="1"/>
</dbReference>
<dbReference type="PANTHER" id="PTHR21349">
    <property type="entry name" value="50S RIBOSOMAL PROTEIN L21"/>
    <property type="match status" value="1"/>
</dbReference>
<dbReference type="PANTHER" id="PTHR21349:SF0">
    <property type="entry name" value="LARGE RIBOSOMAL SUBUNIT PROTEIN BL21M"/>
    <property type="match status" value="1"/>
</dbReference>
<dbReference type="Pfam" id="PF00829">
    <property type="entry name" value="Ribosomal_L21p"/>
    <property type="match status" value="1"/>
</dbReference>
<dbReference type="SUPFAM" id="SSF141091">
    <property type="entry name" value="L21p-like"/>
    <property type="match status" value="1"/>
</dbReference>
<dbReference type="PROSITE" id="PS01169">
    <property type="entry name" value="RIBOSOMAL_L21"/>
    <property type="match status" value="1"/>
</dbReference>
<keyword id="KW-0687">Ribonucleoprotein</keyword>
<keyword id="KW-0689">Ribosomal protein</keyword>
<keyword id="KW-0694">RNA-binding</keyword>
<keyword id="KW-0699">rRNA-binding</keyword>
<comment type="function">
    <text evidence="1">This protein binds to 23S rRNA in the presence of protein L20.</text>
</comment>
<comment type="subunit">
    <text evidence="1">Part of the 50S ribosomal subunit. Contacts protein L20.</text>
</comment>
<comment type="similarity">
    <text evidence="1">Belongs to the bacterial ribosomal protein bL21 family.</text>
</comment>
<protein>
    <recommendedName>
        <fullName evidence="1">Large ribosomal subunit protein bL21</fullName>
    </recommendedName>
    <alternativeName>
        <fullName evidence="2">50S ribosomal protein L21</fullName>
    </alternativeName>
</protein>
<feature type="chain" id="PRO_0000269427" description="Large ribosomal subunit protein bL21">
    <location>
        <begin position="1"/>
        <end position="106"/>
    </location>
</feature>
<proteinExistence type="inferred from homology"/>
<accession>Q8PN25</accession>
<gene>
    <name evidence="1" type="primary">rplU</name>
    <name type="ordered locus">XAC1248</name>
</gene>